<evidence type="ECO:0000255" key="1">
    <source>
        <dbReference type="HAMAP-Rule" id="MF_00133"/>
    </source>
</evidence>
<organism>
    <name type="scientific">Lacticaseibacillus paracasei (strain ATCC 334 / BCRC 17002 / CCUG 31169 / CIP 107868 / KCTC 3260 / NRRL B-441)</name>
    <name type="common">Lactobacillus paracasei</name>
    <dbReference type="NCBI Taxonomy" id="321967"/>
    <lineage>
        <taxon>Bacteria</taxon>
        <taxon>Bacillati</taxon>
        <taxon>Bacillota</taxon>
        <taxon>Bacilli</taxon>
        <taxon>Lactobacillales</taxon>
        <taxon>Lactobacillaceae</taxon>
        <taxon>Lacticaseibacillus</taxon>
    </lineage>
</organism>
<keyword id="KW-0028">Amino-acid biosynthesis</keyword>
<keyword id="KW-0057">Aromatic amino acid biosynthesis</keyword>
<keyword id="KW-0456">Lyase</keyword>
<keyword id="KW-0663">Pyridoxal phosphate</keyword>
<keyword id="KW-1185">Reference proteome</keyword>
<keyword id="KW-0822">Tryptophan biosynthesis</keyword>
<name>TRPB_LACP3</name>
<proteinExistence type="inferred from homology"/>
<dbReference type="EC" id="4.2.1.20" evidence="1"/>
<dbReference type="EMBL" id="CP000423">
    <property type="protein sequence ID" value="ABJ68939.1"/>
    <property type="molecule type" value="Genomic_DNA"/>
</dbReference>
<dbReference type="RefSeq" id="WP_003562635.1">
    <property type="nucleotide sequence ID" value="NC_008526.1"/>
</dbReference>
<dbReference type="RefSeq" id="YP_805381.1">
    <property type="nucleotide sequence ID" value="NC_008526.1"/>
</dbReference>
<dbReference type="SMR" id="Q03CY3"/>
<dbReference type="STRING" id="321967.LSEI_0075"/>
<dbReference type="PaxDb" id="321967-LSEI_0075"/>
<dbReference type="GeneID" id="57088828"/>
<dbReference type="KEGG" id="lca:LSEI_0075"/>
<dbReference type="PATRIC" id="fig|321967.11.peg.100"/>
<dbReference type="HOGENOM" id="CLU_016734_3_1_9"/>
<dbReference type="UniPathway" id="UPA00035">
    <property type="reaction ID" value="UER00044"/>
</dbReference>
<dbReference type="Proteomes" id="UP000001651">
    <property type="component" value="Chromosome"/>
</dbReference>
<dbReference type="GO" id="GO:0005737">
    <property type="term" value="C:cytoplasm"/>
    <property type="evidence" value="ECO:0007669"/>
    <property type="project" value="TreeGrafter"/>
</dbReference>
<dbReference type="GO" id="GO:0004834">
    <property type="term" value="F:tryptophan synthase activity"/>
    <property type="evidence" value="ECO:0007669"/>
    <property type="project" value="UniProtKB-UniRule"/>
</dbReference>
<dbReference type="CDD" id="cd06446">
    <property type="entry name" value="Trp-synth_B"/>
    <property type="match status" value="1"/>
</dbReference>
<dbReference type="FunFam" id="3.40.50.1100:FF:000004">
    <property type="entry name" value="Tryptophan synthase beta chain"/>
    <property type="match status" value="1"/>
</dbReference>
<dbReference type="Gene3D" id="3.40.50.1100">
    <property type="match status" value="2"/>
</dbReference>
<dbReference type="HAMAP" id="MF_00133">
    <property type="entry name" value="Trp_synth_beta"/>
    <property type="match status" value="1"/>
</dbReference>
<dbReference type="InterPro" id="IPR006653">
    <property type="entry name" value="Trp_synth_b_CS"/>
</dbReference>
<dbReference type="InterPro" id="IPR006654">
    <property type="entry name" value="Trp_synth_beta"/>
</dbReference>
<dbReference type="InterPro" id="IPR023026">
    <property type="entry name" value="Trp_synth_beta/beta-like"/>
</dbReference>
<dbReference type="InterPro" id="IPR001926">
    <property type="entry name" value="TrpB-like_PALP"/>
</dbReference>
<dbReference type="InterPro" id="IPR036052">
    <property type="entry name" value="TrpB-like_PALP_sf"/>
</dbReference>
<dbReference type="NCBIfam" id="TIGR00263">
    <property type="entry name" value="trpB"/>
    <property type="match status" value="1"/>
</dbReference>
<dbReference type="PANTHER" id="PTHR48077:SF3">
    <property type="entry name" value="TRYPTOPHAN SYNTHASE"/>
    <property type="match status" value="1"/>
</dbReference>
<dbReference type="PANTHER" id="PTHR48077">
    <property type="entry name" value="TRYPTOPHAN SYNTHASE-RELATED"/>
    <property type="match status" value="1"/>
</dbReference>
<dbReference type="Pfam" id="PF00291">
    <property type="entry name" value="PALP"/>
    <property type="match status" value="1"/>
</dbReference>
<dbReference type="PIRSF" id="PIRSF001413">
    <property type="entry name" value="Trp_syn_beta"/>
    <property type="match status" value="1"/>
</dbReference>
<dbReference type="SUPFAM" id="SSF53686">
    <property type="entry name" value="Tryptophan synthase beta subunit-like PLP-dependent enzymes"/>
    <property type="match status" value="1"/>
</dbReference>
<dbReference type="PROSITE" id="PS00168">
    <property type="entry name" value="TRP_SYNTHASE_BETA"/>
    <property type="match status" value="1"/>
</dbReference>
<feature type="chain" id="PRO_1000018350" description="Tryptophan synthase beta chain">
    <location>
        <begin position="1"/>
        <end position="406"/>
    </location>
</feature>
<feature type="modified residue" description="N6-(pyridoxal phosphate)lysine" evidence="1">
    <location>
        <position position="97"/>
    </location>
</feature>
<gene>
    <name evidence="1" type="primary">trpB</name>
    <name type="ordered locus">LSEI_0075</name>
</gene>
<reference key="1">
    <citation type="journal article" date="2006" name="Proc. Natl. Acad. Sci. U.S.A.">
        <title>Comparative genomics of the lactic acid bacteria.</title>
        <authorList>
            <person name="Makarova K.S."/>
            <person name="Slesarev A."/>
            <person name="Wolf Y.I."/>
            <person name="Sorokin A."/>
            <person name="Mirkin B."/>
            <person name="Koonin E.V."/>
            <person name="Pavlov A."/>
            <person name="Pavlova N."/>
            <person name="Karamychev V."/>
            <person name="Polouchine N."/>
            <person name="Shakhova V."/>
            <person name="Grigoriev I."/>
            <person name="Lou Y."/>
            <person name="Rohksar D."/>
            <person name="Lucas S."/>
            <person name="Huang K."/>
            <person name="Goodstein D.M."/>
            <person name="Hawkins T."/>
            <person name="Plengvidhya V."/>
            <person name="Welker D."/>
            <person name="Hughes J."/>
            <person name="Goh Y."/>
            <person name="Benson A."/>
            <person name="Baldwin K."/>
            <person name="Lee J.-H."/>
            <person name="Diaz-Muniz I."/>
            <person name="Dosti B."/>
            <person name="Smeianov V."/>
            <person name="Wechter W."/>
            <person name="Barabote R."/>
            <person name="Lorca G."/>
            <person name="Altermann E."/>
            <person name="Barrangou R."/>
            <person name="Ganesan B."/>
            <person name="Xie Y."/>
            <person name="Rawsthorne H."/>
            <person name="Tamir D."/>
            <person name="Parker C."/>
            <person name="Breidt F."/>
            <person name="Broadbent J.R."/>
            <person name="Hutkins R."/>
            <person name="O'Sullivan D."/>
            <person name="Steele J."/>
            <person name="Unlu G."/>
            <person name="Saier M.H. Jr."/>
            <person name="Klaenhammer T."/>
            <person name="Richardson P."/>
            <person name="Kozyavkin S."/>
            <person name="Weimer B.C."/>
            <person name="Mills D.A."/>
        </authorList>
    </citation>
    <scope>NUCLEOTIDE SEQUENCE [LARGE SCALE GENOMIC DNA]</scope>
    <source>
        <strain>ATCC 334 / BCRC 17002 / CCUG 31169 / CIP 107868 / KCTC 3260 / NRRL B-441</strain>
    </source>
</reference>
<comment type="function">
    <text evidence="1">The beta subunit is responsible for the synthesis of L-tryptophan from indole and L-serine.</text>
</comment>
<comment type="catalytic activity">
    <reaction evidence="1">
        <text>(1S,2R)-1-C-(indol-3-yl)glycerol 3-phosphate + L-serine = D-glyceraldehyde 3-phosphate + L-tryptophan + H2O</text>
        <dbReference type="Rhea" id="RHEA:10532"/>
        <dbReference type="ChEBI" id="CHEBI:15377"/>
        <dbReference type="ChEBI" id="CHEBI:33384"/>
        <dbReference type="ChEBI" id="CHEBI:57912"/>
        <dbReference type="ChEBI" id="CHEBI:58866"/>
        <dbReference type="ChEBI" id="CHEBI:59776"/>
        <dbReference type="EC" id="4.2.1.20"/>
    </reaction>
</comment>
<comment type="cofactor">
    <cofactor evidence="1">
        <name>pyridoxal 5'-phosphate</name>
        <dbReference type="ChEBI" id="CHEBI:597326"/>
    </cofactor>
</comment>
<comment type="pathway">
    <text evidence="1">Amino-acid biosynthesis; L-tryptophan biosynthesis; L-tryptophan from chorismate: step 5/5.</text>
</comment>
<comment type="subunit">
    <text evidence="1">Tetramer of two alpha and two beta chains.</text>
</comment>
<comment type="similarity">
    <text evidence="1">Belongs to the TrpB family.</text>
</comment>
<sequence length="406" mass="43791">MKTLNETTQQSTRAGRYGKDFGGQYIPETLMTELEKVTKAFNDLKDNPEFKAELNDLLVNYANRPSLLYYAKNMTEDLGGAKIYLKREDLNHTGAHKINNVIGQALLAKHLGKKRLIAETGAGQHGVATATIAALMGMDCEIFMGKEDTDRQKLNVYRMELLGAKVHPVTSGSMVLKDAVNATLQEWASRSDDTFYVLGSAVGPAPFPEMVKHFQSVISTESKQQLQAKEARLPDMVVACVGGGSNAIGSFAAYIDDPSVQLVGVEAAGKGVDTDRTAATIERGSVGIFHGMKSLFMQNEDGQIDPVYSISAGLDYPGVGPEHAALAQEGRAQYVGITDDEAVEAFTYIAKQEGIVAAIESCHAIAYVEKIAPQMAKDQIIICTLSGRGDKDVASIAKYKGVDVDE</sequence>
<accession>Q03CY3</accession>
<protein>
    <recommendedName>
        <fullName evidence="1">Tryptophan synthase beta chain</fullName>
        <ecNumber evidence="1">4.2.1.20</ecNumber>
    </recommendedName>
</protein>